<evidence type="ECO:0000255" key="1">
    <source>
        <dbReference type="HAMAP-Rule" id="MF_00374"/>
    </source>
</evidence>
<evidence type="ECO:0000305" key="2"/>
<protein>
    <recommendedName>
        <fullName evidence="1">Large ribosomal subunit protein uL29</fullName>
    </recommendedName>
    <alternativeName>
        <fullName evidence="2">50S ribosomal protein L29</fullName>
    </alternativeName>
</protein>
<dbReference type="EMBL" id="CP000378">
    <property type="protein sequence ID" value="ABF77649.1"/>
    <property type="molecule type" value="Genomic_DNA"/>
</dbReference>
<dbReference type="SMR" id="Q1BRV6"/>
<dbReference type="HOGENOM" id="CLU_158491_1_1_4"/>
<dbReference type="GO" id="GO:0022625">
    <property type="term" value="C:cytosolic large ribosomal subunit"/>
    <property type="evidence" value="ECO:0007669"/>
    <property type="project" value="TreeGrafter"/>
</dbReference>
<dbReference type="GO" id="GO:0003735">
    <property type="term" value="F:structural constituent of ribosome"/>
    <property type="evidence" value="ECO:0007669"/>
    <property type="project" value="InterPro"/>
</dbReference>
<dbReference type="GO" id="GO:0006412">
    <property type="term" value="P:translation"/>
    <property type="evidence" value="ECO:0007669"/>
    <property type="project" value="UniProtKB-UniRule"/>
</dbReference>
<dbReference type="CDD" id="cd00427">
    <property type="entry name" value="Ribosomal_L29_HIP"/>
    <property type="match status" value="1"/>
</dbReference>
<dbReference type="FunFam" id="1.10.287.310:FF:000001">
    <property type="entry name" value="50S ribosomal protein L29"/>
    <property type="match status" value="1"/>
</dbReference>
<dbReference type="Gene3D" id="6.10.140.1970">
    <property type="match status" value="1"/>
</dbReference>
<dbReference type="HAMAP" id="MF_00374">
    <property type="entry name" value="Ribosomal_uL29"/>
    <property type="match status" value="1"/>
</dbReference>
<dbReference type="InterPro" id="IPR050063">
    <property type="entry name" value="Ribosomal_protein_uL29"/>
</dbReference>
<dbReference type="InterPro" id="IPR001854">
    <property type="entry name" value="Ribosomal_uL29"/>
</dbReference>
<dbReference type="InterPro" id="IPR018254">
    <property type="entry name" value="Ribosomal_uL29_CS"/>
</dbReference>
<dbReference type="InterPro" id="IPR036049">
    <property type="entry name" value="Ribosomal_uL29_sf"/>
</dbReference>
<dbReference type="NCBIfam" id="TIGR00012">
    <property type="entry name" value="L29"/>
    <property type="match status" value="1"/>
</dbReference>
<dbReference type="PANTHER" id="PTHR10916">
    <property type="entry name" value="60S RIBOSOMAL PROTEIN L35/50S RIBOSOMAL PROTEIN L29"/>
    <property type="match status" value="1"/>
</dbReference>
<dbReference type="PANTHER" id="PTHR10916:SF0">
    <property type="entry name" value="LARGE RIBOSOMAL SUBUNIT PROTEIN UL29C"/>
    <property type="match status" value="1"/>
</dbReference>
<dbReference type="Pfam" id="PF00831">
    <property type="entry name" value="Ribosomal_L29"/>
    <property type="match status" value="1"/>
</dbReference>
<dbReference type="SUPFAM" id="SSF46561">
    <property type="entry name" value="Ribosomal protein L29 (L29p)"/>
    <property type="match status" value="1"/>
</dbReference>
<dbReference type="PROSITE" id="PS00579">
    <property type="entry name" value="RIBOSOMAL_L29"/>
    <property type="match status" value="1"/>
</dbReference>
<accession>Q1BRV6</accession>
<keyword id="KW-0687">Ribonucleoprotein</keyword>
<keyword id="KW-0689">Ribosomal protein</keyword>
<feature type="chain" id="PRO_1000007432" description="Large ribosomal subunit protein uL29">
    <location>
        <begin position="1"/>
        <end position="64"/>
    </location>
</feature>
<reference key="1">
    <citation type="submission" date="2006-05" db="EMBL/GenBank/DDBJ databases">
        <title>Complete sequence of chromosome 1 of Burkholderia cenocepacia AU 1054.</title>
        <authorList>
            <consortium name="US DOE Joint Genome Institute"/>
            <person name="Copeland A."/>
            <person name="Lucas S."/>
            <person name="Lapidus A."/>
            <person name="Barry K."/>
            <person name="Detter J.C."/>
            <person name="Glavina del Rio T."/>
            <person name="Hammon N."/>
            <person name="Israni S."/>
            <person name="Dalin E."/>
            <person name="Tice H."/>
            <person name="Pitluck S."/>
            <person name="Chain P."/>
            <person name="Malfatti S."/>
            <person name="Shin M."/>
            <person name="Vergez L."/>
            <person name="Schmutz J."/>
            <person name="Larimer F."/>
            <person name="Land M."/>
            <person name="Hauser L."/>
            <person name="Kyrpides N."/>
            <person name="Lykidis A."/>
            <person name="LiPuma J.J."/>
            <person name="Konstantinidis K."/>
            <person name="Tiedje J.M."/>
            <person name="Richardson P."/>
        </authorList>
    </citation>
    <scope>NUCLEOTIDE SEQUENCE [LARGE SCALE GENOMIC DNA]</scope>
    <source>
        <strain>AU 1054</strain>
    </source>
</reference>
<gene>
    <name evidence="1" type="primary">rpmC</name>
    <name type="ordered locus">Bcen_2751</name>
</gene>
<name>RL29_BURO1</name>
<proteinExistence type="inferred from homology"/>
<comment type="similarity">
    <text evidence="1">Belongs to the universal ribosomal protein uL29 family.</text>
</comment>
<sequence>MKASELLQKDQAALNKELADLLKAQFGLRMQLATQQLTNTSQLKKVRRDIARVRTVMTQKANQK</sequence>
<organism>
    <name type="scientific">Burkholderia orbicola (strain AU 1054)</name>
    <dbReference type="NCBI Taxonomy" id="331271"/>
    <lineage>
        <taxon>Bacteria</taxon>
        <taxon>Pseudomonadati</taxon>
        <taxon>Pseudomonadota</taxon>
        <taxon>Betaproteobacteria</taxon>
        <taxon>Burkholderiales</taxon>
        <taxon>Burkholderiaceae</taxon>
        <taxon>Burkholderia</taxon>
        <taxon>Burkholderia cepacia complex</taxon>
        <taxon>Burkholderia orbicola</taxon>
    </lineage>
</organism>